<protein>
    <recommendedName>
        <fullName evidence="1">Iron(III) enterobactin esterase</fullName>
        <ecNumber evidence="1">3.1.1.108</ecNumber>
    </recommendedName>
    <alternativeName>
        <fullName>Enterochelin esterase</fullName>
    </alternativeName>
    <alternativeName>
        <fullName>Ferric enterobactin esterase</fullName>
    </alternativeName>
</protein>
<accession>Q56855</accession>
<reference key="1">
    <citation type="journal article" date="1999" name="J. Bacteriol.">
        <title>Ferric enterochelin transport in Yersinia enterocolitica: molecular and evolutionary aspects.</title>
        <authorList>
            <person name="Schubert S."/>
            <person name="Fischer D."/>
            <person name="Heesemann J."/>
        </authorList>
    </citation>
    <scope>NUCLEOTIDE SEQUENCE [GENOMIC DNA]</scope>
    <scope>DISRUPTION PHENOTYPE</scope>
    <source>
        <strain>ATCC 51871 / WA-314 / Serotype O:8</strain>
    </source>
</reference>
<organism>
    <name type="scientific">Yersinia enterocolitica</name>
    <dbReference type="NCBI Taxonomy" id="630"/>
    <lineage>
        <taxon>Bacteria</taxon>
        <taxon>Pseudomonadati</taxon>
        <taxon>Pseudomonadota</taxon>
        <taxon>Gammaproteobacteria</taxon>
        <taxon>Enterobacterales</taxon>
        <taxon>Yersiniaceae</taxon>
        <taxon>Yersinia</taxon>
    </lineage>
</organism>
<sequence length="353" mass="39840">MKSRGLSVSTTNEHPDSQRLLADPLAGSESWWQQIAQWGTPLVEPISEDKVRLTFLWREPVAGADEPTYSRVYIDVNGVTDHHSTHPETLQRLGQTHVWYWQAEVESDFRGSYSFMPVTAEHCLNLPEGTPQERRQAQRNWWISLMDLAQNDPFNHTAPHSSYRGRPLSAVHLADAIPQTAWQPIDAGQQLPTDTQRLQLITWHSELLGNSRNVWIYHTHGTEDNAERPLAILLDGQYWATRQPIFGVLDNETDAGRLPASVYVLIDIIDQPHRSVELPCNQDFWQALQTELLPQVAALQPFTDQASRTVVAGQSFGWVGLAICRITLAAAFWWCAESSPVPSGGRMLIISKL</sequence>
<keyword id="KW-0963">Cytoplasm</keyword>
<keyword id="KW-0378">Hydrolase</keyword>
<evidence type="ECO:0000250" key="1">
    <source>
        <dbReference type="UniProtKB" id="P13039"/>
    </source>
</evidence>
<evidence type="ECO:0000269" key="2">
    <source>
    </source>
</evidence>
<evidence type="ECO:0000303" key="3">
    <source>
    </source>
</evidence>
<evidence type="ECO:0000305" key="4"/>
<feature type="chain" id="PRO_0000087232" description="Iron(III) enterobactin esterase">
    <location>
        <begin position="1"/>
        <end position="353"/>
    </location>
</feature>
<proteinExistence type="inferred from homology"/>
<dbReference type="EC" id="3.1.1.108" evidence="1"/>
<dbReference type="EMBL" id="U41370">
    <property type="protein sequence ID" value="AAB02191.1"/>
    <property type="molecule type" value="Genomic_DNA"/>
</dbReference>
<dbReference type="SMR" id="Q56855"/>
<dbReference type="ESTHER" id="yeren-fes">
    <property type="family name" value="A85-IroE-IroD-Fes-Yiel"/>
</dbReference>
<dbReference type="GO" id="GO:0005737">
    <property type="term" value="C:cytoplasm"/>
    <property type="evidence" value="ECO:0007669"/>
    <property type="project" value="UniProtKB-SubCell"/>
</dbReference>
<dbReference type="GO" id="GO:0008849">
    <property type="term" value="F:enterochelin esterase activity"/>
    <property type="evidence" value="ECO:0007669"/>
    <property type="project" value="InterPro"/>
</dbReference>
<dbReference type="GO" id="GO:0005506">
    <property type="term" value="F:iron ion binding"/>
    <property type="evidence" value="ECO:0007669"/>
    <property type="project" value="InterPro"/>
</dbReference>
<dbReference type="GO" id="GO:0006826">
    <property type="term" value="P:iron ion transport"/>
    <property type="evidence" value="ECO:0007669"/>
    <property type="project" value="InterPro"/>
</dbReference>
<dbReference type="Gene3D" id="3.40.50.1820">
    <property type="entry name" value="alpha/beta hydrolase"/>
    <property type="match status" value="1"/>
</dbReference>
<dbReference type="Gene3D" id="2.60.40.10">
    <property type="entry name" value="Immunoglobulins"/>
    <property type="match status" value="1"/>
</dbReference>
<dbReference type="InterPro" id="IPR029058">
    <property type="entry name" value="AB_hydrolase_fold"/>
</dbReference>
<dbReference type="InterPro" id="IPR021764">
    <property type="entry name" value="Enterochelin_esterase_N"/>
</dbReference>
<dbReference type="InterPro" id="IPR013783">
    <property type="entry name" value="Ig-like_fold"/>
</dbReference>
<dbReference type="InterPro" id="IPR014756">
    <property type="entry name" value="Ig_E-set"/>
</dbReference>
<dbReference type="InterPro" id="IPR050583">
    <property type="entry name" value="Mycobacterial_A85_antigen"/>
</dbReference>
<dbReference type="NCBIfam" id="NF007758">
    <property type="entry name" value="PRK10439.1"/>
    <property type="match status" value="1"/>
</dbReference>
<dbReference type="PANTHER" id="PTHR48098">
    <property type="entry name" value="ENTEROCHELIN ESTERASE-RELATED"/>
    <property type="match status" value="1"/>
</dbReference>
<dbReference type="PANTHER" id="PTHR48098:SF3">
    <property type="entry name" value="IRON(III) ENTEROBACTIN ESTERASE"/>
    <property type="match status" value="1"/>
</dbReference>
<dbReference type="Pfam" id="PF11806">
    <property type="entry name" value="Enterochelin_N"/>
    <property type="match status" value="1"/>
</dbReference>
<dbReference type="SUPFAM" id="SSF53474">
    <property type="entry name" value="alpha/beta-Hydrolases"/>
    <property type="match status" value="1"/>
</dbReference>
<dbReference type="SUPFAM" id="SSF81296">
    <property type="entry name" value="E set domains"/>
    <property type="match status" value="1"/>
</dbReference>
<comment type="function">
    <text evidence="1">Catalyzes the hydrolysis of ferric enterobactin (Fe-Ent). Is responsible for the release of iron from ferric enterobactin.</text>
</comment>
<comment type="catalytic activity">
    <reaction evidence="1">
        <text>Fe(III)-enterobactin + 3 H2O + H(+) = Fe(III)-[N-(2,3-dihydroxybenzoyl)-L-serine] + 2 N-(2,3-dihydroxybenzoyl)-L-serine</text>
        <dbReference type="Rhea" id="RHEA:30111"/>
        <dbReference type="ChEBI" id="CHEBI:15377"/>
        <dbReference type="ChEBI" id="CHEBI:15378"/>
        <dbReference type="ChEBI" id="CHEBI:28199"/>
        <dbReference type="ChEBI" id="CHEBI:58154"/>
        <dbReference type="ChEBI" id="CHEBI:143010"/>
        <dbReference type="EC" id="3.1.1.108"/>
    </reaction>
    <physiologicalReaction direction="left-to-right" evidence="1">
        <dbReference type="Rhea" id="RHEA:30112"/>
    </physiologicalReaction>
</comment>
<comment type="catalytic activity">
    <reaction evidence="1">
        <text>Fe(III)-enterobactin + H2O = Fe(III)-[N-(2,3-dihydroxybenzoyl)-L-serine]3 + H(+)</text>
        <dbReference type="Rhea" id="RHEA:59256"/>
        <dbReference type="ChEBI" id="CHEBI:15377"/>
        <dbReference type="ChEBI" id="CHEBI:15378"/>
        <dbReference type="ChEBI" id="CHEBI:28199"/>
        <dbReference type="ChEBI" id="CHEBI:143011"/>
    </reaction>
    <physiologicalReaction direction="left-to-right" evidence="1">
        <dbReference type="Rhea" id="RHEA:59257"/>
    </physiologicalReaction>
</comment>
<comment type="catalytic activity">
    <reaction evidence="1">
        <text>Fe(III)-[N-(2,3-dihydroxybenzoyl)-L-serine]3 + H2O + H(+) = Fe(III)-[N-(2,3-dihydroxybenzoyl)-L-serine]2 + N-(2,3-dihydroxybenzoyl)-L-serine</text>
        <dbReference type="Rhea" id="RHEA:59260"/>
        <dbReference type="ChEBI" id="CHEBI:15377"/>
        <dbReference type="ChEBI" id="CHEBI:15378"/>
        <dbReference type="ChEBI" id="CHEBI:58154"/>
        <dbReference type="ChEBI" id="CHEBI:143011"/>
        <dbReference type="ChEBI" id="CHEBI:143012"/>
    </reaction>
    <physiologicalReaction direction="left-to-right" evidence="1">
        <dbReference type="Rhea" id="RHEA:59261"/>
    </physiologicalReaction>
</comment>
<comment type="catalytic activity">
    <reaction evidence="1">
        <text>Fe(III)-[N-(2,3-dihydroxybenzoyl)-L-serine]2 + H2O + H(+) = Fe(III)-[N-(2,3-dihydroxybenzoyl)-L-serine] + N-(2,3-dihydroxybenzoyl)-L-serine</text>
        <dbReference type="Rhea" id="RHEA:59264"/>
        <dbReference type="ChEBI" id="CHEBI:15377"/>
        <dbReference type="ChEBI" id="CHEBI:15378"/>
        <dbReference type="ChEBI" id="CHEBI:58154"/>
        <dbReference type="ChEBI" id="CHEBI:143010"/>
        <dbReference type="ChEBI" id="CHEBI:143012"/>
    </reaction>
    <physiologicalReaction direction="left-to-right" evidence="1">
        <dbReference type="Rhea" id="RHEA:59265"/>
    </physiologicalReaction>
</comment>
<comment type="subcellular location">
    <subcellularLocation>
        <location evidence="1">Cytoplasm</location>
    </subcellularLocation>
</comment>
<comment type="disruption phenotype">
    <text evidence="2">Disruption of the gene abrogates enterochelin-supported growth on iron-chelated media.</text>
</comment>
<comment type="similarity">
    <text evidence="4">Belongs to the Fes family.</text>
</comment>
<name>FES_YEREN</name>
<gene>
    <name evidence="3" type="primary">fes</name>
</gene>